<organism>
    <name type="scientific">Thermoanaerobacter sp. (strain X514)</name>
    <dbReference type="NCBI Taxonomy" id="399726"/>
    <lineage>
        <taxon>Bacteria</taxon>
        <taxon>Bacillati</taxon>
        <taxon>Bacillota</taxon>
        <taxon>Clostridia</taxon>
        <taxon>Thermoanaerobacterales</taxon>
        <taxon>Thermoanaerobacteraceae</taxon>
        <taxon>Thermoanaerobacter</taxon>
    </lineage>
</organism>
<protein>
    <recommendedName>
        <fullName evidence="1">Small ribosomal subunit protein bS21</fullName>
    </recommendedName>
    <alternativeName>
        <fullName evidence="3">30S ribosomal protein S21</fullName>
    </alternativeName>
</protein>
<proteinExistence type="inferred from homology"/>
<name>RS21_THEPX</name>
<evidence type="ECO:0000255" key="1">
    <source>
        <dbReference type="HAMAP-Rule" id="MF_00358"/>
    </source>
</evidence>
<evidence type="ECO:0000256" key="2">
    <source>
        <dbReference type="SAM" id="MobiDB-lite"/>
    </source>
</evidence>
<evidence type="ECO:0000305" key="3"/>
<feature type="chain" id="PRO_1000120673" description="Small ribosomal subunit protein bS21">
    <location>
        <begin position="1"/>
        <end position="61"/>
    </location>
</feature>
<feature type="region of interest" description="Disordered" evidence="2">
    <location>
        <begin position="34"/>
        <end position="61"/>
    </location>
</feature>
<feature type="compositionally biased region" description="Basic residues" evidence="2">
    <location>
        <begin position="43"/>
        <end position="61"/>
    </location>
</feature>
<comment type="similarity">
    <text evidence="1">Belongs to the bacterial ribosomal protein bS21 family.</text>
</comment>
<keyword id="KW-0687">Ribonucleoprotein</keyword>
<keyword id="KW-0689">Ribosomal protein</keyword>
<accession>B0K6Z9</accession>
<reference key="1">
    <citation type="submission" date="2008-01" db="EMBL/GenBank/DDBJ databases">
        <title>Complete sequence of Thermoanaerobacter sp. X514.</title>
        <authorList>
            <consortium name="US DOE Joint Genome Institute"/>
            <person name="Copeland A."/>
            <person name="Lucas S."/>
            <person name="Lapidus A."/>
            <person name="Barry K."/>
            <person name="Glavina del Rio T."/>
            <person name="Dalin E."/>
            <person name="Tice H."/>
            <person name="Pitluck S."/>
            <person name="Bruce D."/>
            <person name="Goodwin L."/>
            <person name="Saunders E."/>
            <person name="Brettin T."/>
            <person name="Detter J.C."/>
            <person name="Han C."/>
            <person name="Schmutz J."/>
            <person name="Larimer F."/>
            <person name="Land M."/>
            <person name="Hauser L."/>
            <person name="Kyrpides N."/>
            <person name="Kim E."/>
            <person name="Hemme C."/>
            <person name="Fields M.W."/>
            <person name="He Z."/>
            <person name="Zhou J."/>
            <person name="Richardson P."/>
        </authorList>
    </citation>
    <scope>NUCLEOTIDE SEQUENCE [LARGE SCALE GENOMIC DNA]</scope>
    <source>
        <strain>X514</strain>
    </source>
</reference>
<gene>
    <name evidence="1" type="primary">rpsU</name>
    <name type="ordered locus">Teth514_1335</name>
</gene>
<dbReference type="EMBL" id="CP000923">
    <property type="protein sequence ID" value="ABY92625.1"/>
    <property type="molecule type" value="Genomic_DNA"/>
</dbReference>
<dbReference type="RefSeq" id="WP_003867924.1">
    <property type="nucleotide sequence ID" value="NC_010320.1"/>
</dbReference>
<dbReference type="SMR" id="B0K6Z9"/>
<dbReference type="KEGG" id="tex:Teth514_1335"/>
<dbReference type="HOGENOM" id="CLU_159258_1_2_9"/>
<dbReference type="Proteomes" id="UP000002155">
    <property type="component" value="Chromosome"/>
</dbReference>
<dbReference type="GO" id="GO:1990904">
    <property type="term" value="C:ribonucleoprotein complex"/>
    <property type="evidence" value="ECO:0007669"/>
    <property type="project" value="UniProtKB-KW"/>
</dbReference>
<dbReference type="GO" id="GO:0005840">
    <property type="term" value="C:ribosome"/>
    <property type="evidence" value="ECO:0007669"/>
    <property type="project" value="UniProtKB-KW"/>
</dbReference>
<dbReference type="GO" id="GO:0003735">
    <property type="term" value="F:structural constituent of ribosome"/>
    <property type="evidence" value="ECO:0007669"/>
    <property type="project" value="InterPro"/>
</dbReference>
<dbReference type="GO" id="GO:0006412">
    <property type="term" value="P:translation"/>
    <property type="evidence" value="ECO:0007669"/>
    <property type="project" value="UniProtKB-UniRule"/>
</dbReference>
<dbReference type="Gene3D" id="1.20.5.1150">
    <property type="entry name" value="Ribosomal protein S8"/>
    <property type="match status" value="1"/>
</dbReference>
<dbReference type="HAMAP" id="MF_00358">
    <property type="entry name" value="Ribosomal_bS21"/>
    <property type="match status" value="1"/>
</dbReference>
<dbReference type="InterPro" id="IPR001911">
    <property type="entry name" value="Ribosomal_bS21"/>
</dbReference>
<dbReference type="InterPro" id="IPR038380">
    <property type="entry name" value="Ribosomal_bS21_sf"/>
</dbReference>
<dbReference type="NCBIfam" id="TIGR00030">
    <property type="entry name" value="S21p"/>
    <property type="match status" value="1"/>
</dbReference>
<dbReference type="PANTHER" id="PTHR21109">
    <property type="entry name" value="MITOCHONDRIAL 28S RIBOSOMAL PROTEIN S21"/>
    <property type="match status" value="1"/>
</dbReference>
<dbReference type="PANTHER" id="PTHR21109:SF22">
    <property type="entry name" value="SMALL RIBOSOMAL SUBUNIT PROTEIN BS21"/>
    <property type="match status" value="1"/>
</dbReference>
<dbReference type="Pfam" id="PF01165">
    <property type="entry name" value="Ribosomal_S21"/>
    <property type="match status" value="1"/>
</dbReference>
<dbReference type="PRINTS" id="PR00976">
    <property type="entry name" value="RIBOSOMALS21"/>
</dbReference>
<sequence length="61" mass="7283">MAEVRVGENESLDNALRRFRRQCSKAGVLSEVRKREHYESPSVKRKKKSEAARKRKYKYNK</sequence>